<reference key="1">
    <citation type="journal article" date="1996" name="Nucleic Acids Res.">
        <title>Complete sequence analysis of the genome of the bacterium Mycoplasma pneumoniae.</title>
        <authorList>
            <person name="Himmelreich R."/>
            <person name="Hilbert H."/>
            <person name="Plagens H."/>
            <person name="Pirkl E."/>
            <person name="Li B.-C."/>
            <person name="Herrmann R."/>
        </authorList>
    </citation>
    <scope>NUCLEOTIDE SEQUENCE [LARGE SCALE GENOMIC DNA]</scope>
    <source>
        <strain>ATCC 29342 / M129 / Subtype 1</strain>
    </source>
</reference>
<evidence type="ECO:0000255" key="1">
    <source>
        <dbReference type="HAMAP-Rule" id="MF_00004"/>
    </source>
</evidence>
<gene>
    <name evidence="1" type="primary">apt</name>
    <name type="ordered locus">MPN_395</name>
    <name type="ORF">MP443</name>
</gene>
<comment type="function">
    <text evidence="1">Catalyzes a salvage reaction resulting in the formation of AMP, that is energically less costly than de novo synthesis.</text>
</comment>
<comment type="catalytic activity">
    <reaction evidence="1">
        <text>AMP + diphosphate = 5-phospho-alpha-D-ribose 1-diphosphate + adenine</text>
        <dbReference type="Rhea" id="RHEA:16609"/>
        <dbReference type="ChEBI" id="CHEBI:16708"/>
        <dbReference type="ChEBI" id="CHEBI:33019"/>
        <dbReference type="ChEBI" id="CHEBI:58017"/>
        <dbReference type="ChEBI" id="CHEBI:456215"/>
        <dbReference type="EC" id="2.4.2.7"/>
    </reaction>
</comment>
<comment type="pathway">
    <text evidence="1">Purine metabolism; AMP biosynthesis via salvage pathway; AMP from adenine: step 1/1.</text>
</comment>
<comment type="subunit">
    <text evidence="1">Homodimer.</text>
</comment>
<comment type="subcellular location">
    <subcellularLocation>
        <location evidence="1">Cytoplasm</location>
    </subcellularLocation>
</comment>
<comment type="similarity">
    <text evidence="1">Belongs to the purine/pyrimidine phosphoribosyltransferase family.</text>
</comment>
<protein>
    <recommendedName>
        <fullName evidence="1">Adenine phosphoribosyltransferase</fullName>
        <shortName evidence="1">APRT</shortName>
        <ecNumber evidence="1">2.4.2.7</ecNumber>
    </recommendedName>
</protein>
<organism>
    <name type="scientific">Mycoplasma pneumoniae (strain ATCC 29342 / M129 / Subtype 1)</name>
    <name type="common">Mycoplasmoides pneumoniae</name>
    <dbReference type="NCBI Taxonomy" id="272634"/>
    <lineage>
        <taxon>Bacteria</taxon>
        <taxon>Bacillati</taxon>
        <taxon>Mycoplasmatota</taxon>
        <taxon>Mycoplasmoidales</taxon>
        <taxon>Mycoplasmoidaceae</taxon>
        <taxon>Mycoplasmoides</taxon>
    </lineage>
</organism>
<dbReference type="EC" id="2.4.2.7" evidence="1"/>
<dbReference type="EMBL" id="U00089">
    <property type="protein sequence ID" value="AAG34752.1"/>
    <property type="molecule type" value="Genomic_DNA"/>
</dbReference>
<dbReference type="PIR" id="S73769">
    <property type="entry name" value="S73769"/>
</dbReference>
<dbReference type="RefSeq" id="NP_110083.1">
    <property type="nucleotide sequence ID" value="NC_000912.1"/>
</dbReference>
<dbReference type="RefSeq" id="WP_010874751.1">
    <property type="nucleotide sequence ID" value="NZ_OU342337.1"/>
</dbReference>
<dbReference type="SMR" id="P75388"/>
<dbReference type="IntAct" id="P75388">
    <property type="interactions" value="4"/>
</dbReference>
<dbReference type="STRING" id="272634.MPN_395"/>
<dbReference type="EnsemblBacteria" id="AAG34752">
    <property type="protein sequence ID" value="AAG34752"/>
    <property type="gene ID" value="MPN_395"/>
</dbReference>
<dbReference type="GeneID" id="66608946"/>
<dbReference type="KEGG" id="mpn:MPN_395"/>
<dbReference type="PATRIC" id="fig|272634.6.peg.426"/>
<dbReference type="HOGENOM" id="CLU_063339_3_0_14"/>
<dbReference type="OrthoDB" id="9803963at2"/>
<dbReference type="BioCyc" id="MPNE272634:G1GJ3-627-MONOMER"/>
<dbReference type="UniPathway" id="UPA00588">
    <property type="reaction ID" value="UER00646"/>
</dbReference>
<dbReference type="Proteomes" id="UP000000808">
    <property type="component" value="Chromosome"/>
</dbReference>
<dbReference type="GO" id="GO:0005737">
    <property type="term" value="C:cytoplasm"/>
    <property type="evidence" value="ECO:0007669"/>
    <property type="project" value="UniProtKB-SubCell"/>
</dbReference>
<dbReference type="GO" id="GO:0002055">
    <property type="term" value="F:adenine binding"/>
    <property type="evidence" value="ECO:0007669"/>
    <property type="project" value="TreeGrafter"/>
</dbReference>
<dbReference type="GO" id="GO:0003999">
    <property type="term" value="F:adenine phosphoribosyltransferase activity"/>
    <property type="evidence" value="ECO:0007669"/>
    <property type="project" value="UniProtKB-UniRule"/>
</dbReference>
<dbReference type="GO" id="GO:0016208">
    <property type="term" value="F:AMP binding"/>
    <property type="evidence" value="ECO:0007669"/>
    <property type="project" value="TreeGrafter"/>
</dbReference>
<dbReference type="GO" id="GO:0006168">
    <property type="term" value="P:adenine salvage"/>
    <property type="evidence" value="ECO:0007669"/>
    <property type="project" value="InterPro"/>
</dbReference>
<dbReference type="GO" id="GO:0044209">
    <property type="term" value="P:AMP salvage"/>
    <property type="evidence" value="ECO:0007669"/>
    <property type="project" value="UniProtKB-UniRule"/>
</dbReference>
<dbReference type="GO" id="GO:0006166">
    <property type="term" value="P:purine ribonucleoside salvage"/>
    <property type="evidence" value="ECO:0007669"/>
    <property type="project" value="UniProtKB-KW"/>
</dbReference>
<dbReference type="CDD" id="cd06223">
    <property type="entry name" value="PRTases_typeI"/>
    <property type="match status" value="1"/>
</dbReference>
<dbReference type="FunFam" id="3.40.50.2020:FF:000004">
    <property type="entry name" value="Adenine phosphoribosyltransferase"/>
    <property type="match status" value="1"/>
</dbReference>
<dbReference type="Gene3D" id="3.40.50.2020">
    <property type="match status" value="1"/>
</dbReference>
<dbReference type="HAMAP" id="MF_00004">
    <property type="entry name" value="Aden_phosphoribosyltr"/>
    <property type="match status" value="1"/>
</dbReference>
<dbReference type="InterPro" id="IPR005764">
    <property type="entry name" value="Ade_phspho_trans"/>
</dbReference>
<dbReference type="InterPro" id="IPR000836">
    <property type="entry name" value="PRibTrfase_dom"/>
</dbReference>
<dbReference type="InterPro" id="IPR029057">
    <property type="entry name" value="PRTase-like"/>
</dbReference>
<dbReference type="InterPro" id="IPR050054">
    <property type="entry name" value="UPRTase/APRTase"/>
</dbReference>
<dbReference type="NCBIfam" id="TIGR01090">
    <property type="entry name" value="apt"/>
    <property type="match status" value="1"/>
</dbReference>
<dbReference type="NCBIfam" id="NF002636">
    <property type="entry name" value="PRK02304.1-5"/>
    <property type="match status" value="1"/>
</dbReference>
<dbReference type="PANTHER" id="PTHR32315">
    <property type="entry name" value="ADENINE PHOSPHORIBOSYLTRANSFERASE"/>
    <property type="match status" value="1"/>
</dbReference>
<dbReference type="PANTHER" id="PTHR32315:SF3">
    <property type="entry name" value="ADENINE PHOSPHORIBOSYLTRANSFERASE"/>
    <property type="match status" value="1"/>
</dbReference>
<dbReference type="Pfam" id="PF00156">
    <property type="entry name" value="Pribosyltran"/>
    <property type="match status" value="1"/>
</dbReference>
<dbReference type="SUPFAM" id="SSF53271">
    <property type="entry name" value="PRTase-like"/>
    <property type="match status" value="1"/>
</dbReference>
<dbReference type="PROSITE" id="PS00103">
    <property type="entry name" value="PUR_PYR_PR_TRANSFER"/>
    <property type="match status" value="1"/>
</dbReference>
<name>APT_MYCPN</name>
<sequence>MKQKLQALDRAIKRFNDFPTPGILFYDITPIFLNSELFEFVLEQMAQFIQEVKADGIVCPEARGFIFGGALASKTKLPLVLVRKPHKLSGELARETYDLEYRQNSILEMRVDALENCKRCVIVDDLLATAGTVAAIDKLIARLGSQTVGYCFLIELQKLHGKAKLQPNVATKILLHY</sequence>
<accession>P75388</accession>
<keyword id="KW-0963">Cytoplasm</keyword>
<keyword id="KW-0328">Glycosyltransferase</keyword>
<keyword id="KW-0660">Purine salvage</keyword>
<keyword id="KW-1185">Reference proteome</keyword>
<keyword id="KW-0808">Transferase</keyword>
<proteinExistence type="inferred from homology"/>
<feature type="chain" id="PRO_0000149417" description="Adenine phosphoribosyltransferase">
    <location>
        <begin position="1"/>
        <end position="177"/>
    </location>
</feature>